<protein>
    <recommendedName>
        <fullName evidence="1">Large ribosomal subunit protein uL16</fullName>
    </recommendedName>
    <alternativeName>
        <fullName evidence="2">50S ribosomal protein L16</fullName>
    </alternativeName>
</protein>
<organism>
    <name type="scientific">Bartonella quintana (strain Toulouse)</name>
    <name type="common">Rochalimaea quintana</name>
    <dbReference type="NCBI Taxonomy" id="283165"/>
    <lineage>
        <taxon>Bacteria</taxon>
        <taxon>Pseudomonadati</taxon>
        <taxon>Pseudomonadota</taxon>
        <taxon>Alphaproteobacteria</taxon>
        <taxon>Hyphomicrobiales</taxon>
        <taxon>Bartonellaceae</taxon>
        <taxon>Bartonella</taxon>
    </lineage>
</organism>
<evidence type="ECO:0000255" key="1">
    <source>
        <dbReference type="HAMAP-Rule" id="MF_01342"/>
    </source>
</evidence>
<evidence type="ECO:0000305" key="2"/>
<sequence length="137" mass="15518">MLQPKRTRFRKQFKGRIHGVSKGGTDLNFGAYGLKAVEPERITARQIEAARRAITRYMKRSGRVWIRIFPDLPVTSKPTEVRMGKGKGGVEYWAARVAPGRIIFEIDGVLEDVAREALRLGAAKLPIKTRFIQRLAE</sequence>
<reference key="1">
    <citation type="journal article" date="2004" name="Proc. Natl. Acad. Sci. U.S.A.">
        <title>The louse-borne human pathogen Bartonella quintana is a genomic derivative of the zoonotic agent Bartonella henselae.</title>
        <authorList>
            <person name="Alsmark U.C.M."/>
            <person name="Frank A.C."/>
            <person name="Karlberg E.O."/>
            <person name="Legault B.-A."/>
            <person name="Ardell D.H."/>
            <person name="Canbaeck B."/>
            <person name="Eriksson A.-S."/>
            <person name="Naeslund A.K."/>
            <person name="Handley S.A."/>
            <person name="Huvet M."/>
            <person name="La Scola B."/>
            <person name="Holmberg M."/>
            <person name="Andersson S.G.E."/>
        </authorList>
    </citation>
    <scope>NUCLEOTIDE SEQUENCE [LARGE SCALE GENOMIC DNA]</scope>
    <source>
        <strain>Toulouse</strain>
    </source>
</reference>
<feature type="chain" id="PRO_0000062049" description="Large ribosomal subunit protein uL16">
    <location>
        <begin position="1"/>
        <end position="137"/>
    </location>
</feature>
<name>RL16_BARQU</name>
<keyword id="KW-0687">Ribonucleoprotein</keyword>
<keyword id="KW-0689">Ribosomal protein</keyword>
<keyword id="KW-0694">RNA-binding</keyword>
<keyword id="KW-0699">rRNA-binding</keyword>
<keyword id="KW-0820">tRNA-binding</keyword>
<proteinExistence type="inferred from homology"/>
<dbReference type="EMBL" id="BX897700">
    <property type="protein sequence ID" value="CAF26299.1"/>
    <property type="molecule type" value="Genomic_DNA"/>
</dbReference>
<dbReference type="RefSeq" id="WP_011179545.1">
    <property type="nucleotide sequence ID" value="NC_005955.1"/>
</dbReference>
<dbReference type="SMR" id="Q6FZC9"/>
<dbReference type="GeneID" id="56532828"/>
<dbReference type="KEGG" id="bqu:BQ08160"/>
<dbReference type="eggNOG" id="COG0197">
    <property type="taxonomic scope" value="Bacteria"/>
</dbReference>
<dbReference type="HOGENOM" id="CLU_078858_2_1_5"/>
<dbReference type="OrthoDB" id="9802589at2"/>
<dbReference type="Proteomes" id="UP000000597">
    <property type="component" value="Chromosome"/>
</dbReference>
<dbReference type="GO" id="GO:0022625">
    <property type="term" value="C:cytosolic large ribosomal subunit"/>
    <property type="evidence" value="ECO:0007669"/>
    <property type="project" value="TreeGrafter"/>
</dbReference>
<dbReference type="GO" id="GO:0019843">
    <property type="term" value="F:rRNA binding"/>
    <property type="evidence" value="ECO:0007669"/>
    <property type="project" value="UniProtKB-UniRule"/>
</dbReference>
<dbReference type="GO" id="GO:0003735">
    <property type="term" value="F:structural constituent of ribosome"/>
    <property type="evidence" value="ECO:0007669"/>
    <property type="project" value="InterPro"/>
</dbReference>
<dbReference type="GO" id="GO:0000049">
    <property type="term" value="F:tRNA binding"/>
    <property type="evidence" value="ECO:0007669"/>
    <property type="project" value="UniProtKB-KW"/>
</dbReference>
<dbReference type="GO" id="GO:0006412">
    <property type="term" value="P:translation"/>
    <property type="evidence" value="ECO:0007669"/>
    <property type="project" value="UniProtKB-UniRule"/>
</dbReference>
<dbReference type="CDD" id="cd01433">
    <property type="entry name" value="Ribosomal_L16_L10e"/>
    <property type="match status" value="1"/>
</dbReference>
<dbReference type="FunFam" id="3.90.1170.10:FF:000001">
    <property type="entry name" value="50S ribosomal protein L16"/>
    <property type="match status" value="1"/>
</dbReference>
<dbReference type="Gene3D" id="3.90.1170.10">
    <property type="entry name" value="Ribosomal protein L10e/L16"/>
    <property type="match status" value="1"/>
</dbReference>
<dbReference type="HAMAP" id="MF_01342">
    <property type="entry name" value="Ribosomal_uL16"/>
    <property type="match status" value="1"/>
</dbReference>
<dbReference type="InterPro" id="IPR047873">
    <property type="entry name" value="Ribosomal_uL16"/>
</dbReference>
<dbReference type="InterPro" id="IPR000114">
    <property type="entry name" value="Ribosomal_uL16_bact-type"/>
</dbReference>
<dbReference type="InterPro" id="IPR020798">
    <property type="entry name" value="Ribosomal_uL16_CS"/>
</dbReference>
<dbReference type="InterPro" id="IPR016180">
    <property type="entry name" value="Ribosomal_uL16_dom"/>
</dbReference>
<dbReference type="InterPro" id="IPR036920">
    <property type="entry name" value="Ribosomal_uL16_sf"/>
</dbReference>
<dbReference type="NCBIfam" id="TIGR01164">
    <property type="entry name" value="rplP_bact"/>
    <property type="match status" value="1"/>
</dbReference>
<dbReference type="PANTHER" id="PTHR12220">
    <property type="entry name" value="50S/60S RIBOSOMAL PROTEIN L16"/>
    <property type="match status" value="1"/>
</dbReference>
<dbReference type="PANTHER" id="PTHR12220:SF13">
    <property type="entry name" value="LARGE RIBOSOMAL SUBUNIT PROTEIN UL16M"/>
    <property type="match status" value="1"/>
</dbReference>
<dbReference type="Pfam" id="PF00252">
    <property type="entry name" value="Ribosomal_L16"/>
    <property type="match status" value="1"/>
</dbReference>
<dbReference type="PRINTS" id="PR00060">
    <property type="entry name" value="RIBOSOMALL16"/>
</dbReference>
<dbReference type="SUPFAM" id="SSF54686">
    <property type="entry name" value="Ribosomal protein L16p/L10e"/>
    <property type="match status" value="1"/>
</dbReference>
<dbReference type="PROSITE" id="PS00586">
    <property type="entry name" value="RIBOSOMAL_L16_1"/>
    <property type="match status" value="1"/>
</dbReference>
<dbReference type="PROSITE" id="PS00701">
    <property type="entry name" value="RIBOSOMAL_L16_2"/>
    <property type="match status" value="1"/>
</dbReference>
<accession>Q6FZC9</accession>
<gene>
    <name evidence="1" type="primary">rplP</name>
    <name type="ordered locus">BQ08160</name>
</gene>
<comment type="function">
    <text evidence="1">Binds 23S rRNA and is also seen to make contacts with the A and possibly P site tRNAs.</text>
</comment>
<comment type="subunit">
    <text evidence="1">Part of the 50S ribosomal subunit.</text>
</comment>
<comment type="similarity">
    <text evidence="1">Belongs to the universal ribosomal protein uL16 family.</text>
</comment>